<dbReference type="EC" id="1.3.7.7" evidence="1"/>
<dbReference type="EMBL" id="AY958086">
    <property type="protein sequence ID" value="AAX45803.1"/>
    <property type="molecule type" value="Genomic_DNA"/>
</dbReference>
<dbReference type="RefSeq" id="YP_636477.1">
    <property type="nucleotide sequence ID" value="NC_008117.1"/>
</dbReference>
<dbReference type="SMR" id="Q32RP9"/>
<dbReference type="GeneID" id="4108252"/>
<dbReference type="UniPathway" id="UPA00670"/>
<dbReference type="GO" id="GO:0009507">
    <property type="term" value="C:chloroplast"/>
    <property type="evidence" value="ECO:0007669"/>
    <property type="project" value="UniProtKB-SubCell"/>
</dbReference>
<dbReference type="GO" id="GO:0051539">
    <property type="term" value="F:4 iron, 4 sulfur cluster binding"/>
    <property type="evidence" value="ECO:0007669"/>
    <property type="project" value="UniProtKB-UniRule"/>
</dbReference>
<dbReference type="GO" id="GO:0005524">
    <property type="term" value="F:ATP binding"/>
    <property type="evidence" value="ECO:0007669"/>
    <property type="project" value="UniProtKB-UniRule"/>
</dbReference>
<dbReference type="GO" id="GO:0046872">
    <property type="term" value="F:metal ion binding"/>
    <property type="evidence" value="ECO:0007669"/>
    <property type="project" value="UniProtKB-KW"/>
</dbReference>
<dbReference type="GO" id="GO:0016730">
    <property type="term" value="F:oxidoreductase activity, acting on iron-sulfur proteins as donors"/>
    <property type="evidence" value="ECO:0007669"/>
    <property type="project" value="InterPro"/>
</dbReference>
<dbReference type="GO" id="GO:0016636">
    <property type="term" value="F:oxidoreductase activity, acting on the CH-CH group of donors, iron-sulfur protein as acceptor"/>
    <property type="evidence" value="ECO:0007669"/>
    <property type="project" value="UniProtKB-UniRule"/>
</dbReference>
<dbReference type="GO" id="GO:0036068">
    <property type="term" value="P:light-independent chlorophyll biosynthetic process"/>
    <property type="evidence" value="ECO:0007669"/>
    <property type="project" value="UniProtKB-UniRule"/>
</dbReference>
<dbReference type="GO" id="GO:0019685">
    <property type="term" value="P:photosynthesis, dark reaction"/>
    <property type="evidence" value="ECO:0007669"/>
    <property type="project" value="InterPro"/>
</dbReference>
<dbReference type="CDD" id="cd01981">
    <property type="entry name" value="Pchlide_reductase_B"/>
    <property type="match status" value="1"/>
</dbReference>
<dbReference type="Gene3D" id="1.20.89.20">
    <property type="match status" value="1"/>
</dbReference>
<dbReference type="Gene3D" id="3.40.50.1980">
    <property type="entry name" value="Nitrogenase molybdenum iron protein domain"/>
    <property type="match status" value="3"/>
</dbReference>
<dbReference type="Gene3D" id="1.10.8.550">
    <property type="entry name" value="Proto-chlorophyllide reductase 57 kD subunit B"/>
    <property type="match status" value="1"/>
</dbReference>
<dbReference type="HAMAP" id="MF_00353">
    <property type="entry name" value="ChlB_BchB"/>
    <property type="match status" value="1"/>
</dbReference>
<dbReference type="InterPro" id="IPR050152">
    <property type="entry name" value="ChlB/BchB/BchZ"/>
</dbReference>
<dbReference type="InterPro" id="IPR013580">
    <property type="entry name" value="LI-POR_suB-like_C"/>
</dbReference>
<dbReference type="InterPro" id="IPR000510">
    <property type="entry name" value="Nase/OxRdtase_comp1"/>
</dbReference>
<dbReference type="InterPro" id="IPR042298">
    <property type="entry name" value="P-CP_red_C"/>
</dbReference>
<dbReference type="InterPro" id="IPR005969">
    <property type="entry name" value="Protochl_reductB"/>
</dbReference>
<dbReference type="InterPro" id="IPR016209">
    <property type="entry name" value="Protochlorophyllide_Rdtase"/>
</dbReference>
<dbReference type="NCBIfam" id="TIGR01278">
    <property type="entry name" value="DPOR_BchB"/>
    <property type="match status" value="1"/>
</dbReference>
<dbReference type="PANTHER" id="PTHR33712">
    <property type="entry name" value="LIGHT-INDEPENDENT PROTOCHLOROPHYLLIDE REDUCTASE SUBUNIT B"/>
    <property type="match status" value="1"/>
</dbReference>
<dbReference type="PANTHER" id="PTHR33712:SF7">
    <property type="entry name" value="LIGHT-INDEPENDENT PROTOCHLOROPHYLLIDE REDUCTASE SUBUNIT B"/>
    <property type="match status" value="1"/>
</dbReference>
<dbReference type="Pfam" id="PF00148">
    <property type="entry name" value="Oxidored_nitro"/>
    <property type="match status" value="1"/>
</dbReference>
<dbReference type="Pfam" id="PF08369">
    <property type="entry name" value="PCP_red"/>
    <property type="match status" value="1"/>
</dbReference>
<dbReference type="PIRSF" id="PIRSF000163">
    <property type="entry name" value="PCP_ChlB"/>
    <property type="match status" value="1"/>
</dbReference>
<dbReference type="SUPFAM" id="SSF53807">
    <property type="entry name" value="Helical backbone' metal receptor"/>
    <property type="match status" value="1"/>
</dbReference>
<feature type="chain" id="PRO_0000275263" description="Light-independent protochlorophyllide reductase subunit B">
    <location>
        <begin position="1"/>
        <end position="513"/>
    </location>
</feature>
<feature type="active site" description="Proton donor" evidence="1">
    <location>
        <position position="299"/>
    </location>
</feature>
<feature type="binding site" evidence="1">
    <location>
        <position position="36"/>
    </location>
    <ligand>
        <name>[4Fe-4S] cluster</name>
        <dbReference type="ChEBI" id="CHEBI:49883"/>
        <note>ligand shared with heterodimeric partner</note>
    </ligand>
</feature>
<feature type="binding site" evidence="1">
    <location>
        <begin position="434"/>
        <end position="435"/>
    </location>
    <ligand>
        <name>substrate</name>
    </ligand>
</feature>
<geneLocation type="chloroplast"/>
<sequence>MKLAYWMYAGPAHIGTLRVASSFRNVHAIMHAPLGDDYFNVMRSMLERERDFTPVTASIVDRHVLARGSQEKVVENITRKDKEERPDLIVLTPTCTSSILQEDLQNFVDRASIASNSDVILADVNHYRVNELQAADRTLEQVVRYYLDKARRQGTLSQSITEKPSVNIIGMFTLGFHNQHDCKELKRLLQDLGIQVNEVIPEGGSVENLRNLPKAWLNLVPYREVGLMTALYLEKEFGMPYVATTPMGIVGTAEFVRQIQSHINKWAPMFLGKLVDYEPYIDQQTRFISQAAWFSRSIDCQNLTGKKVVVFGDTTHAASMTKILAREMGIHVVCAGTYCKHDADWFKEQVQGYCDEILVTDDHTQVGDMIARIEPAAIFGSQMERHIGKRLDIPCGVISAPVHIQNFPLGYRPFLGYEGTNQIADLVYNSFTLGMEDHLLEMFGGHDTKEVITKSLSTDTDFTWDSESQLELTKIPGFVRAKIKRNTEKFARQNGVAKITVEVMYAAKEALNA</sequence>
<keyword id="KW-0004">4Fe-4S</keyword>
<keyword id="KW-0067">ATP-binding</keyword>
<keyword id="KW-0149">Chlorophyll biosynthesis</keyword>
<keyword id="KW-0150">Chloroplast</keyword>
<keyword id="KW-0408">Iron</keyword>
<keyword id="KW-0411">Iron-sulfur</keyword>
<keyword id="KW-0479">Metal-binding</keyword>
<keyword id="KW-0547">Nucleotide-binding</keyword>
<keyword id="KW-0560">Oxidoreductase</keyword>
<keyword id="KW-0602">Photosynthesis</keyword>
<keyword id="KW-0934">Plastid</keyword>
<proteinExistence type="inferred from homology"/>
<comment type="function">
    <text evidence="1">Component of the dark-operative protochlorophyllide reductase (DPOR) that uses Mg-ATP and reduced ferredoxin to reduce ring D of protochlorophyllide (Pchlide) to form chlorophyllide a (Chlide). This reaction is light-independent. The NB-protein (ChlN-ChlB) is the catalytic component of the complex.</text>
</comment>
<comment type="catalytic activity">
    <reaction evidence="1">
        <text>chlorophyllide a + oxidized 2[4Fe-4S]-[ferredoxin] + 2 ADP + 2 phosphate = protochlorophyllide a + reduced 2[4Fe-4S]-[ferredoxin] + 2 ATP + 2 H2O</text>
        <dbReference type="Rhea" id="RHEA:28202"/>
        <dbReference type="Rhea" id="RHEA-COMP:10002"/>
        <dbReference type="Rhea" id="RHEA-COMP:10004"/>
        <dbReference type="ChEBI" id="CHEBI:15377"/>
        <dbReference type="ChEBI" id="CHEBI:30616"/>
        <dbReference type="ChEBI" id="CHEBI:33722"/>
        <dbReference type="ChEBI" id="CHEBI:33723"/>
        <dbReference type="ChEBI" id="CHEBI:43474"/>
        <dbReference type="ChEBI" id="CHEBI:83348"/>
        <dbReference type="ChEBI" id="CHEBI:83350"/>
        <dbReference type="ChEBI" id="CHEBI:456216"/>
        <dbReference type="EC" id="1.3.7.7"/>
    </reaction>
</comment>
<comment type="cofactor">
    <cofactor evidence="1">
        <name>[4Fe-4S] cluster</name>
        <dbReference type="ChEBI" id="CHEBI:49883"/>
    </cofactor>
    <text evidence="1">Binds 1 [4Fe-4S] cluster per heterodimer. The cluster is bound at the heterodimer interface by residues from both subunits.</text>
</comment>
<comment type="pathway">
    <text evidence="1">Porphyrin-containing compound metabolism; chlorophyll biosynthesis (light-independent).</text>
</comment>
<comment type="subunit">
    <text evidence="1">Protochlorophyllide reductase is composed of three subunits; ChlL, ChlN and ChlB. Forms a heterotetramer of two ChlB and two ChlN subunits.</text>
</comment>
<comment type="subcellular location">
    <subcellularLocation>
        <location>Plastid</location>
        <location>Chloroplast</location>
    </subcellularLocation>
</comment>
<comment type="similarity">
    <text evidence="1">Belongs to the ChlB/BchB/BchZ family.</text>
</comment>
<name>CHLB_ZYGCR</name>
<evidence type="ECO:0000255" key="1">
    <source>
        <dbReference type="HAMAP-Rule" id="MF_00353"/>
    </source>
</evidence>
<organism>
    <name type="scientific">Zygnema circumcarinatum</name>
    <name type="common">Green alga</name>
    <dbReference type="NCBI Taxonomy" id="35869"/>
    <lineage>
        <taxon>Eukaryota</taxon>
        <taxon>Viridiplantae</taxon>
        <taxon>Streptophyta</taxon>
        <taxon>Zygnematophyceae</taxon>
        <taxon>Zygnematophycidae</taxon>
        <taxon>Zygnematales</taxon>
        <taxon>Zygnemataceae</taxon>
        <taxon>Zygnema</taxon>
    </lineage>
</organism>
<gene>
    <name evidence="1" type="primary">chlB</name>
</gene>
<reference key="1">
    <citation type="journal article" date="2005" name="BMC Biol.">
        <title>The complete chloroplast DNA sequences of the charophycean green algae Staurastrum and Zygnema reveal that the chloroplast genome underwent extensive changes during the evolution of the Zygnematales.</title>
        <authorList>
            <person name="Turmel M."/>
            <person name="Otis C."/>
            <person name="Lemieux C."/>
        </authorList>
    </citation>
    <scope>NUCLEOTIDE SEQUENCE [LARGE SCALE GENOMIC DNA]</scope>
</reference>
<protein>
    <recommendedName>
        <fullName evidence="1">Light-independent protochlorophyllide reductase subunit B</fullName>
        <shortName evidence="1">DPOR subunit B</shortName>
        <shortName evidence="1">LI-POR subunit B</shortName>
        <ecNumber evidence="1">1.3.7.7</ecNumber>
    </recommendedName>
</protein>
<accession>Q32RP9</accession>